<accession>Q87FK3</accession>
<sequence length="497" mass="54862">MKIFNDKQVWFVTGSQHLYGPQVLESVAQNSEEIIAGLNSSDDISVSIANKGTVKTPDEILAVCRAANNDPDCIGLMLWMHTFSPAKMWIAGLTQLNKPFLHLHTQFNAALPWDEIDMDFMNLNQSAHGCREFGFIGTRLNIERKVVVGHWQEPQVHRDIDDWCRAAIGVNAGQHLKVARFGDNMRQVAVTEGNKVSAQIQFGYEVNAYGLGELSDVVNSISDADVNHQLDKYACMYEMSPDLFNDSDLKKLMAQEARLELGMESFLKSVGAGAFTNTFENLTGLTNLPGLATQRLMAKGFGYGGEGDWKTAAMTHIMKVMGQGKPGGTSFMEDYTYNFGEKGQVLGAHMLEVCPTIAAAKPRLEVHRHTIGCRCDIPRLIFSGQSGEALNVSIIDLGDRFRMIVNVIDTVTPPQSLPHLPVAHALWEPQPNLNIAAAAWIHAGGAHHAVYSQAVTLPMLADYAEILGIEMVVIDNSTNLRQFKQELRNNGVYYRLG</sequence>
<keyword id="KW-0054">Arabinose catabolism</keyword>
<keyword id="KW-0119">Carbohydrate metabolism</keyword>
<keyword id="KW-0413">Isomerase</keyword>
<keyword id="KW-0464">Manganese</keyword>
<keyword id="KW-0479">Metal-binding</keyword>
<gene>
    <name evidence="1" type="primary">araA</name>
    <name type="ordered locus">VPA1676</name>
</gene>
<organism>
    <name type="scientific">Vibrio parahaemolyticus serotype O3:K6 (strain RIMD 2210633)</name>
    <dbReference type="NCBI Taxonomy" id="223926"/>
    <lineage>
        <taxon>Bacteria</taxon>
        <taxon>Pseudomonadati</taxon>
        <taxon>Pseudomonadota</taxon>
        <taxon>Gammaproteobacteria</taxon>
        <taxon>Vibrionales</taxon>
        <taxon>Vibrionaceae</taxon>
        <taxon>Vibrio</taxon>
    </lineage>
</organism>
<comment type="function">
    <text evidence="1">Catalyzes the conversion of L-arabinose to L-ribulose.</text>
</comment>
<comment type="catalytic activity">
    <reaction evidence="1">
        <text>beta-L-arabinopyranose = L-ribulose</text>
        <dbReference type="Rhea" id="RHEA:14821"/>
        <dbReference type="ChEBI" id="CHEBI:16880"/>
        <dbReference type="ChEBI" id="CHEBI:40886"/>
        <dbReference type="EC" id="5.3.1.4"/>
    </reaction>
</comment>
<comment type="cofactor">
    <cofactor evidence="1">
        <name>Mn(2+)</name>
        <dbReference type="ChEBI" id="CHEBI:29035"/>
    </cofactor>
    <text evidence="1">Binds 1 Mn(2+) ion per subunit.</text>
</comment>
<comment type="pathway">
    <text evidence="1">Carbohydrate degradation; L-arabinose degradation via L-ribulose; D-xylulose 5-phosphate from L-arabinose (bacterial route): step 1/3.</text>
</comment>
<comment type="similarity">
    <text evidence="1">Belongs to the arabinose isomerase family.</text>
</comment>
<comment type="sequence caution" evidence="2">
    <conflict type="erroneous initiation">
        <sequence resource="EMBL-CDS" id="BAC63019"/>
    </conflict>
</comment>
<protein>
    <recommendedName>
        <fullName evidence="1">L-arabinose isomerase</fullName>
        <ecNumber evidence="1">5.3.1.4</ecNumber>
    </recommendedName>
</protein>
<name>ARAA_VIBPA</name>
<evidence type="ECO:0000255" key="1">
    <source>
        <dbReference type="HAMAP-Rule" id="MF_00519"/>
    </source>
</evidence>
<evidence type="ECO:0000305" key="2"/>
<dbReference type="EC" id="5.3.1.4" evidence="1"/>
<dbReference type="EMBL" id="BA000032">
    <property type="protein sequence ID" value="BAC63019.1"/>
    <property type="status" value="ALT_INIT"/>
    <property type="molecule type" value="Genomic_DNA"/>
</dbReference>
<dbReference type="RefSeq" id="NP_801186.1">
    <property type="nucleotide sequence ID" value="NC_004605.1"/>
</dbReference>
<dbReference type="RefSeq" id="WP_005477429.1">
    <property type="nucleotide sequence ID" value="NC_004605.1"/>
</dbReference>
<dbReference type="SMR" id="Q87FK3"/>
<dbReference type="GeneID" id="1192372"/>
<dbReference type="KEGG" id="vpa:VPA1676"/>
<dbReference type="PATRIC" id="fig|223926.6.peg.4594"/>
<dbReference type="eggNOG" id="COG2160">
    <property type="taxonomic scope" value="Bacteria"/>
</dbReference>
<dbReference type="HOGENOM" id="CLU_045663_0_0_6"/>
<dbReference type="UniPathway" id="UPA00145">
    <property type="reaction ID" value="UER00565"/>
</dbReference>
<dbReference type="Proteomes" id="UP000002493">
    <property type="component" value="Chromosome 2"/>
</dbReference>
<dbReference type="GO" id="GO:0005829">
    <property type="term" value="C:cytosol"/>
    <property type="evidence" value="ECO:0007669"/>
    <property type="project" value="TreeGrafter"/>
</dbReference>
<dbReference type="GO" id="GO:0008733">
    <property type="term" value="F:L-arabinose isomerase activity"/>
    <property type="evidence" value="ECO:0007669"/>
    <property type="project" value="UniProtKB-UniRule"/>
</dbReference>
<dbReference type="GO" id="GO:0030145">
    <property type="term" value="F:manganese ion binding"/>
    <property type="evidence" value="ECO:0007669"/>
    <property type="project" value="UniProtKB-UniRule"/>
</dbReference>
<dbReference type="GO" id="GO:0019569">
    <property type="term" value="P:L-arabinose catabolic process to xylulose 5-phosphate"/>
    <property type="evidence" value="ECO:0007669"/>
    <property type="project" value="UniProtKB-UniRule"/>
</dbReference>
<dbReference type="CDD" id="cd03557">
    <property type="entry name" value="L-arabinose_isomerase"/>
    <property type="match status" value="1"/>
</dbReference>
<dbReference type="Gene3D" id="3.40.50.10940">
    <property type="match status" value="1"/>
</dbReference>
<dbReference type="HAMAP" id="MF_00519">
    <property type="entry name" value="Arabinose_Isome"/>
    <property type="match status" value="1"/>
</dbReference>
<dbReference type="InterPro" id="IPR024664">
    <property type="entry name" value="Ara_Isoase_C"/>
</dbReference>
<dbReference type="InterPro" id="IPR055390">
    <property type="entry name" value="AraA_central"/>
</dbReference>
<dbReference type="InterPro" id="IPR055389">
    <property type="entry name" value="AraA_N"/>
</dbReference>
<dbReference type="InterPro" id="IPR038583">
    <property type="entry name" value="AraA_N_sf"/>
</dbReference>
<dbReference type="InterPro" id="IPR004216">
    <property type="entry name" value="Fuc/Ara_isomerase_C"/>
</dbReference>
<dbReference type="InterPro" id="IPR009015">
    <property type="entry name" value="Fucose_isomerase_N/cen_sf"/>
</dbReference>
<dbReference type="InterPro" id="IPR003762">
    <property type="entry name" value="Lara_isomerase"/>
</dbReference>
<dbReference type="NCBIfam" id="NF002795">
    <property type="entry name" value="PRK02929.1"/>
    <property type="match status" value="1"/>
</dbReference>
<dbReference type="PANTHER" id="PTHR38464">
    <property type="entry name" value="L-ARABINOSE ISOMERASE"/>
    <property type="match status" value="1"/>
</dbReference>
<dbReference type="PANTHER" id="PTHR38464:SF1">
    <property type="entry name" value="L-ARABINOSE ISOMERASE"/>
    <property type="match status" value="1"/>
</dbReference>
<dbReference type="Pfam" id="PF24856">
    <property type="entry name" value="AraA_central"/>
    <property type="match status" value="1"/>
</dbReference>
<dbReference type="Pfam" id="PF02610">
    <property type="entry name" value="AraA_N"/>
    <property type="match status" value="1"/>
</dbReference>
<dbReference type="Pfam" id="PF11762">
    <property type="entry name" value="Arabinose_Iso_C"/>
    <property type="match status" value="1"/>
</dbReference>
<dbReference type="PIRSF" id="PIRSF001478">
    <property type="entry name" value="L-ara_isomerase"/>
    <property type="match status" value="1"/>
</dbReference>
<dbReference type="SUPFAM" id="SSF50443">
    <property type="entry name" value="FucI/AraA C-terminal domain-like"/>
    <property type="match status" value="1"/>
</dbReference>
<dbReference type="SUPFAM" id="SSF53743">
    <property type="entry name" value="FucI/AraA N-terminal and middle domains"/>
    <property type="match status" value="1"/>
</dbReference>
<proteinExistence type="inferred from homology"/>
<reference key="1">
    <citation type="journal article" date="2003" name="Lancet">
        <title>Genome sequence of Vibrio parahaemolyticus: a pathogenic mechanism distinct from that of V. cholerae.</title>
        <authorList>
            <person name="Makino K."/>
            <person name="Oshima K."/>
            <person name="Kurokawa K."/>
            <person name="Yokoyama K."/>
            <person name="Uda T."/>
            <person name="Tagomori K."/>
            <person name="Iijima Y."/>
            <person name="Najima M."/>
            <person name="Nakano M."/>
            <person name="Yamashita A."/>
            <person name="Kubota Y."/>
            <person name="Kimura S."/>
            <person name="Yasunaga T."/>
            <person name="Honda T."/>
            <person name="Shinagawa H."/>
            <person name="Hattori M."/>
            <person name="Iida T."/>
        </authorList>
    </citation>
    <scope>NUCLEOTIDE SEQUENCE [LARGE SCALE GENOMIC DNA]</scope>
    <source>
        <strain>RIMD 2210633</strain>
    </source>
</reference>
<feature type="chain" id="PRO_0000312622" description="L-arabinose isomerase">
    <location>
        <begin position="1"/>
        <end position="497"/>
    </location>
</feature>
<feature type="binding site" evidence="1">
    <location>
        <position position="306"/>
    </location>
    <ligand>
        <name>Mn(2+)</name>
        <dbReference type="ChEBI" id="CHEBI:29035"/>
    </ligand>
</feature>
<feature type="binding site" evidence="1">
    <location>
        <position position="333"/>
    </location>
    <ligand>
        <name>Mn(2+)</name>
        <dbReference type="ChEBI" id="CHEBI:29035"/>
    </ligand>
</feature>
<feature type="binding site" evidence="1">
    <location>
        <position position="349"/>
    </location>
    <ligand>
        <name>Mn(2+)</name>
        <dbReference type="ChEBI" id="CHEBI:29035"/>
    </ligand>
</feature>
<feature type="binding site" evidence="1">
    <location>
        <position position="448"/>
    </location>
    <ligand>
        <name>Mn(2+)</name>
        <dbReference type="ChEBI" id="CHEBI:29035"/>
    </ligand>
</feature>